<dbReference type="EMBL" id="AY757359">
    <property type="protein sequence ID" value="AAV31938.1"/>
    <property type="molecule type" value="mRNA"/>
</dbReference>
<dbReference type="EMBL" id="AY725268">
    <property type="protein sequence ID" value="AAU25939.1"/>
    <property type="status" value="ALT_INIT"/>
    <property type="molecule type" value="mRNA"/>
</dbReference>
<dbReference type="EMBL" id="BC123263">
    <property type="protein sequence ID" value="AAI23264.1"/>
    <property type="status" value="ALT_SEQ"/>
    <property type="molecule type" value="mRNA"/>
</dbReference>
<dbReference type="RefSeq" id="NP_001088994.1">
    <property type="nucleotide sequence ID" value="NM_001095525.1"/>
</dbReference>
<dbReference type="SMR" id="Q0IH87"/>
<dbReference type="DNASU" id="496377"/>
<dbReference type="GeneID" id="496377"/>
<dbReference type="KEGG" id="xla:496377"/>
<dbReference type="AGR" id="Xenbase:XB-GENE-6252072"/>
<dbReference type="CTD" id="496377"/>
<dbReference type="Xenbase" id="XB-GENE-6252072">
    <property type="gene designation" value="pax3.L"/>
</dbReference>
<dbReference type="OrthoDB" id="6159439at2759"/>
<dbReference type="Proteomes" id="UP000186698">
    <property type="component" value="Chromosome 5L"/>
</dbReference>
<dbReference type="Bgee" id="496377">
    <property type="expression patterns" value="Expressed in neurula embryo and 6 other cell types or tissues"/>
</dbReference>
<dbReference type="GO" id="GO:0005634">
    <property type="term" value="C:nucleus"/>
    <property type="evidence" value="ECO:0000250"/>
    <property type="project" value="UniProtKB"/>
</dbReference>
<dbReference type="GO" id="GO:0000981">
    <property type="term" value="F:DNA-binding transcription factor activity, RNA polymerase II-specific"/>
    <property type="evidence" value="ECO:0000318"/>
    <property type="project" value="GO_Central"/>
</dbReference>
<dbReference type="GO" id="GO:0000978">
    <property type="term" value="F:RNA polymerase II cis-regulatory region sequence-specific DNA binding"/>
    <property type="evidence" value="ECO:0000318"/>
    <property type="project" value="GO_Central"/>
</dbReference>
<dbReference type="GO" id="GO:0008543">
    <property type="term" value="P:fibroblast growth factor receptor signaling pathway"/>
    <property type="evidence" value="ECO:0000316"/>
    <property type="project" value="UniProtKB"/>
</dbReference>
<dbReference type="GO" id="GO:0048785">
    <property type="term" value="P:hatching gland development"/>
    <property type="evidence" value="ECO:0000315"/>
    <property type="project" value="UniProtKB"/>
</dbReference>
<dbReference type="GO" id="GO:0007399">
    <property type="term" value="P:nervous system development"/>
    <property type="evidence" value="ECO:0000318"/>
    <property type="project" value="GO_Central"/>
</dbReference>
<dbReference type="GO" id="GO:0014034">
    <property type="term" value="P:neural crest cell fate commitment"/>
    <property type="evidence" value="ECO:0000315"/>
    <property type="project" value="UniProtKB"/>
</dbReference>
<dbReference type="GO" id="GO:0014029">
    <property type="term" value="P:neural crest formation"/>
    <property type="evidence" value="ECO:0000315"/>
    <property type="project" value="UniProtKB"/>
</dbReference>
<dbReference type="GO" id="GO:0045893">
    <property type="term" value="P:positive regulation of DNA-templated transcription"/>
    <property type="evidence" value="ECO:0000250"/>
    <property type="project" value="UniProtKB"/>
</dbReference>
<dbReference type="GO" id="GO:0006357">
    <property type="term" value="P:regulation of transcription by RNA polymerase II"/>
    <property type="evidence" value="ECO:0000318"/>
    <property type="project" value="GO_Central"/>
</dbReference>
<dbReference type="GO" id="GO:0016055">
    <property type="term" value="P:Wnt signaling pathway"/>
    <property type="evidence" value="ECO:0000316"/>
    <property type="project" value="UniProtKB"/>
</dbReference>
<dbReference type="CDD" id="cd00086">
    <property type="entry name" value="homeodomain"/>
    <property type="match status" value="1"/>
</dbReference>
<dbReference type="CDD" id="cd00131">
    <property type="entry name" value="PAX"/>
    <property type="match status" value="1"/>
</dbReference>
<dbReference type="FunFam" id="1.10.10.10:FF:000080">
    <property type="entry name" value="paired box protein Pax-3 isoform X2"/>
    <property type="match status" value="1"/>
</dbReference>
<dbReference type="FunFam" id="1.10.10.60:FF:000035">
    <property type="entry name" value="paired box protein Pax-3 isoform X2"/>
    <property type="match status" value="1"/>
</dbReference>
<dbReference type="FunFam" id="1.10.10.10:FF:000031">
    <property type="entry name" value="Paired box protein Pax-7"/>
    <property type="match status" value="1"/>
</dbReference>
<dbReference type="Gene3D" id="1.10.10.60">
    <property type="entry name" value="Homeodomain-like"/>
    <property type="match status" value="1"/>
</dbReference>
<dbReference type="Gene3D" id="1.10.10.10">
    <property type="entry name" value="Winged helix-like DNA-binding domain superfamily/Winged helix DNA-binding domain"/>
    <property type="match status" value="2"/>
</dbReference>
<dbReference type="InterPro" id="IPR001356">
    <property type="entry name" value="HD"/>
</dbReference>
<dbReference type="InterPro" id="IPR017970">
    <property type="entry name" value="Homeobox_CS"/>
</dbReference>
<dbReference type="InterPro" id="IPR009057">
    <property type="entry name" value="Homeodomain-like_sf"/>
</dbReference>
<dbReference type="InterPro" id="IPR043182">
    <property type="entry name" value="PAIRED_DNA-bd_dom"/>
</dbReference>
<dbReference type="InterPro" id="IPR001523">
    <property type="entry name" value="Paired_dom"/>
</dbReference>
<dbReference type="InterPro" id="IPR022106">
    <property type="entry name" value="Pax7_C"/>
</dbReference>
<dbReference type="InterPro" id="IPR043565">
    <property type="entry name" value="PAX_fam"/>
</dbReference>
<dbReference type="InterPro" id="IPR036388">
    <property type="entry name" value="WH-like_DNA-bd_sf"/>
</dbReference>
<dbReference type="PANTHER" id="PTHR45636:SF17">
    <property type="entry name" value="PAIRED BOX PROTEIN PAX-3"/>
    <property type="match status" value="1"/>
</dbReference>
<dbReference type="PANTHER" id="PTHR45636">
    <property type="entry name" value="PAIRED BOX PROTEIN PAX-6-RELATED-RELATED"/>
    <property type="match status" value="1"/>
</dbReference>
<dbReference type="Pfam" id="PF00046">
    <property type="entry name" value="Homeodomain"/>
    <property type="match status" value="1"/>
</dbReference>
<dbReference type="Pfam" id="PF00292">
    <property type="entry name" value="PAX"/>
    <property type="match status" value="1"/>
</dbReference>
<dbReference type="Pfam" id="PF12360">
    <property type="entry name" value="Pax7"/>
    <property type="match status" value="1"/>
</dbReference>
<dbReference type="PRINTS" id="PR00027">
    <property type="entry name" value="PAIREDBOX"/>
</dbReference>
<dbReference type="SMART" id="SM00389">
    <property type="entry name" value="HOX"/>
    <property type="match status" value="1"/>
</dbReference>
<dbReference type="SMART" id="SM00351">
    <property type="entry name" value="PAX"/>
    <property type="match status" value="1"/>
</dbReference>
<dbReference type="SUPFAM" id="SSF46689">
    <property type="entry name" value="Homeodomain-like"/>
    <property type="match status" value="2"/>
</dbReference>
<dbReference type="PROSITE" id="PS00027">
    <property type="entry name" value="HOMEOBOX_1"/>
    <property type="match status" value="1"/>
</dbReference>
<dbReference type="PROSITE" id="PS50071">
    <property type="entry name" value="HOMEOBOX_2"/>
    <property type="match status" value="1"/>
</dbReference>
<dbReference type="PROSITE" id="PS00034">
    <property type="entry name" value="PAIRED_1"/>
    <property type="match status" value="1"/>
</dbReference>
<dbReference type="PROSITE" id="PS51057">
    <property type="entry name" value="PAIRED_2"/>
    <property type="match status" value="1"/>
</dbReference>
<protein>
    <recommendedName>
        <fullName>Paired box protein Pax-3-B</fullName>
        <shortName>xPax3-B</shortName>
    </recommendedName>
    <alternativeName>
        <fullName>Paired-domain transcription factor Pax3-B</fullName>
    </alternativeName>
</protein>
<keyword id="KW-0025">Alternative splicing</keyword>
<keyword id="KW-0217">Developmental protein</keyword>
<keyword id="KW-0221">Differentiation</keyword>
<keyword id="KW-0238">DNA-binding</keyword>
<keyword id="KW-0371">Homeobox</keyword>
<keyword id="KW-0524">Neurogenesis</keyword>
<keyword id="KW-0539">Nucleus</keyword>
<keyword id="KW-0563">Paired box</keyword>
<keyword id="KW-1185">Reference proteome</keyword>
<keyword id="KW-0804">Transcription</keyword>
<keyword id="KW-0805">Transcription regulation</keyword>
<keyword id="KW-0879">Wnt signaling pathway</keyword>
<name>PAX3B_XENLA</name>
<feature type="chain" id="PRO_0000366208" description="Paired box protein Pax-3-B">
    <location>
        <begin position="1"/>
        <end position="483"/>
    </location>
</feature>
<feature type="DNA-binding region" description="Paired" evidence="4">
    <location>
        <begin position="34"/>
        <end position="160"/>
    </location>
</feature>
<feature type="DNA-binding region" description="Homeobox" evidence="3">
    <location>
        <begin position="219"/>
        <end position="278"/>
    </location>
</feature>
<feature type="region of interest" description="PAI subdomain" evidence="4">
    <location>
        <begin position="37"/>
        <end position="93"/>
    </location>
</feature>
<feature type="region of interest" description="RED subdomain" evidence="4">
    <location>
        <begin position="112"/>
        <end position="160"/>
    </location>
</feature>
<feature type="region of interest" description="Disordered" evidence="5">
    <location>
        <begin position="164"/>
        <end position="227"/>
    </location>
</feature>
<feature type="region of interest" description="Disordered" evidence="5">
    <location>
        <begin position="310"/>
        <end position="353"/>
    </location>
</feature>
<feature type="compositionally biased region" description="Basic and acidic residues" evidence="5">
    <location>
        <begin position="171"/>
        <end position="195"/>
    </location>
</feature>
<feature type="compositionally biased region" description="Acidic residues" evidence="5">
    <location>
        <begin position="200"/>
        <end position="211"/>
    </location>
</feature>
<feature type="compositionally biased region" description="Polar residues" evidence="5">
    <location>
        <begin position="310"/>
        <end position="329"/>
    </location>
</feature>
<feature type="compositionally biased region" description="Polar residues" evidence="5">
    <location>
        <begin position="338"/>
        <end position="352"/>
    </location>
</feature>
<feature type="splice variant" id="VSP_053009" description="In isoform 2." evidence="13 14">
    <location>
        <begin position="126"/>
        <end position="149"/>
    </location>
</feature>
<feature type="sequence conflict" description="In Ref. 2; AAU25939." evidence="15" ref="2">
    <original>K</original>
    <variation>KQ</variation>
    <location>
        <position position="107"/>
    </location>
</feature>
<feature type="sequence conflict" description="In Ref. 3; AAI23264." evidence="15" ref="3">
    <original>WFS</original>
    <variation>ARA</variation>
    <location>
        <begin position="266"/>
        <end position="268"/>
    </location>
</feature>
<feature type="sequence conflict" description="In Ref. 1; AAV31938." evidence="15" ref="1">
    <original>SVHQ</original>
    <variation>VHQS</variation>
    <location>
        <begin position="338"/>
        <end position="341"/>
    </location>
</feature>
<sequence length="483" mass="53544">MTSLAGAVPRMMRPCPGQNYPRTGFPLEVSTPLGQGRVNQLGGVFINGRPLPNHIRHKIVEMAHHGIRPCVISRQLRVSHGCVSKILCRYQETGSIRPGAIGGSKPKVTTPEVEKKIEEFKRDNPGMFSWEIRDKLLKDGVCDRNTVPSVSSISRILRSKFGKGDEEDMELDRKEQEESEKRAKHSIDGILRERAPASPESEEGSDIDSEPDLPLKRKQRRSRTTFTAEQLEELERAFERTHYPDIYTREELAQRAKLTEARVQVWFSNRRARWRKQAGANQLMAFNHLIPGAFPPTAMPALPTYQLSETSYQPTSIPQAVSDPSNTVHRPQPLPPSSVHQSLPSNPDSSSAYCLPSSRHGFSSYTDSFVPPSGPSNPMNPAIGNGLSPQVMGLLTNHGGVPHQPQTDYALSPLTGGLEPPTAVSASCSQRLEHMKSLDSLSTSQSYCPPTYSTSGYSMEPMTGYQYPQYGQSAFHYLKPDIA</sequence>
<comment type="function">
    <text evidence="9 10 11">Probable transcription factor. Promotes both hatching gland and neural crest cell fates, two of the cell populations that arise from the neural plate border. Acts downstream of msx1 to induce the neural crest, cooperating with zic1 and mediating signals from both the wnt and fgf8 signaling pathways. Induction of hatching gland cell fate is independent of zic1.</text>
</comment>
<comment type="subcellular location">
    <subcellularLocation>
        <location evidence="1 3 4">Nucleus</location>
    </subcellularLocation>
</comment>
<comment type="alternative products">
    <event type="alternative splicing"/>
    <isoform>
        <id>Q0IH87-1</id>
        <name>1</name>
        <sequence type="displayed"/>
    </isoform>
    <isoform>
        <id>Q0IH87-2</id>
        <name evidence="10">2</name>
        <sequence type="described" ref="VSP_053009"/>
    </isoform>
</comment>
<comment type="tissue specificity">
    <text evidence="6 7 8 9 10 11 12">Expressed in the dorsolateral ectoderm during early and mid-gastrula stages. At late-gastrula and neurula stages, expressed in the lateral neural plate, becoming progressively refined to the neural folds during convergence and extension. Expression is also restricted in the A/P axis, extending into the midbrain but excluded from the forebrain.</text>
</comment>
<comment type="induction">
    <text evidence="6 12">By wnt-signaling from the posterior mesoderm.</text>
</comment>
<comment type="similarity">
    <text evidence="2">Belongs to the paired homeobox family.</text>
</comment>
<comment type="sequence caution" evidence="15">
    <conflict type="miscellaneous discrepancy">
        <sequence resource="EMBL-CDS" id="AAI23264"/>
    </conflict>
    <text>May contain intron retention.</text>
</comment>
<comment type="sequence caution" evidence="15">
    <conflict type="erroneous initiation">
        <sequence resource="EMBL-CDS" id="AAU25939"/>
    </conflict>
</comment>
<reference evidence="15 18" key="1">
    <citation type="journal article" date="2005" name="Development">
        <title>Neural crest determination by co-activation of Pax3 and Zic1 genes in Xenopus ectoderm.</title>
        <authorList>
            <person name="Sato T."/>
            <person name="Sasai N."/>
            <person name="Sasai Y."/>
        </authorList>
    </citation>
    <scope>NUCLEOTIDE SEQUENCE [MRNA] (ISOFORM 2)</scope>
    <scope>FUNCTION</scope>
    <scope>TISSUE SPECIFICITY</scope>
</reference>
<reference evidence="15 17" key="2">
    <citation type="submission" date="2004-08" db="EMBL/GenBank/DDBJ databases">
        <authorList>
            <person name="Wang E.P."/>
            <person name="Monsoro-Burq A.-H."/>
            <person name="Harland R.M."/>
        </authorList>
    </citation>
    <scope>NUCLEOTIDE SEQUENCE [MRNA] (ISOFORM 2)</scope>
</reference>
<reference evidence="15 17" key="3">
    <citation type="submission" date="2006-09" db="EMBL/GenBank/DDBJ databases">
        <authorList>
            <consortium name="NIH - Xenopus Gene Collection (XGC) project"/>
        </authorList>
    </citation>
    <scope>NUCLEOTIDE SEQUENCE [LARGE SCALE MRNA] OF 1-268 (ISOFORM 1)</scope>
    <source>
        <tissue evidence="16">Neurula</tissue>
    </source>
</reference>
<reference evidence="15" key="4">
    <citation type="journal article" date="1997" name="Development">
        <title>Expression of Pax-3 is initiated in the early neural plate by posteriorizing signals produced by the organizer and by posterior non-axial mesoderm.</title>
        <authorList>
            <person name="Bang A.G."/>
            <person name="Papalopulu N."/>
            <person name="Kintner C."/>
            <person name="Goulding M.D."/>
        </authorList>
    </citation>
    <scope>TISSUE SPECIFICITY</scope>
    <scope>INDUCTION</scope>
</reference>
<reference evidence="15" key="5">
    <citation type="journal article" date="1999" name="Development">
        <title>Neural tube closure in Xenopus laevis involves medial migration, directed protrusive activity, cell intercalation and convergent extension.</title>
        <authorList>
            <person name="Davidson L.A."/>
            <person name="Keller R.E."/>
        </authorList>
    </citation>
    <scope>TISSUE SPECIFICITY</scope>
</reference>
<reference evidence="15" key="6">
    <citation type="journal article" date="1999" name="Dev. Biol.">
        <title>Expression of Pax-3 in the lateral neural plate is dependent on a Wnt-mediated signal from posterior nonaxial mesoderm.</title>
        <authorList>
            <person name="Bang A.G."/>
            <person name="Papalopulu N."/>
            <person name="Goulding M.D."/>
            <person name="Kintner C."/>
        </authorList>
    </citation>
    <scope>TISSUE SPECIFICITY</scope>
    <scope>INDUCTION</scope>
</reference>
<reference evidence="15" key="7">
    <citation type="journal article" date="2004" name="Dev. Biol.">
        <title>Molecular anatomy of placode development in Xenopus laevis.</title>
        <authorList>
            <person name="Schlosser G."/>
            <person name="Ahrens K."/>
        </authorList>
    </citation>
    <scope>TISSUE SPECIFICITY</scope>
</reference>
<reference evidence="15" key="8">
    <citation type="journal article" date="2005" name="Dev. Cell">
        <title>Msx1 and Pax3 cooperate to mediate FGF8 and WNT signals during Xenopus neural crest induction.</title>
        <authorList>
            <person name="Monsoro-Burq A.-H."/>
            <person name="Wang E.P."/>
            <person name="Harland R.M."/>
        </authorList>
    </citation>
    <scope>FUNCTION</scope>
    <scope>TISSUE SPECIFICITY</scope>
</reference>
<reference evidence="15" key="9">
    <citation type="journal article" date="2007" name="Mol. Biol. Cell">
        <title>The activity of Pax3 and Zic1 regulates three distinct cell fates at the neural plate border.</title>
        <authorList>
            <person name="Hong C.-S."/>
            <person name="Saint-Jeannet J.-P."/>
        </authorList>
    </citation>
    <scope>FUNCTION</scope>
    <scope>TISSUE SPECIFICITY</scope>
</reference>
<accession>Q0IH87</accession>
<accession>Q5UCU0</accession>
<accession>Q645N5</accession>
<evidence type="ECO:0000250" key="1">
    <source>
        <dbReference type="UniProtKB" id="P23760"/>
    </source>
</evidence>
<evidence type="ECO:0000255" key="2"/>
<evidence type="ECO:0000255" key="3">
    <source>
        <dbReference type="PROSITE-ProRule" id="PRU00108"/>
    </source>
</evidence>
<evidence type="ECO:0000255" key="4">
    <source>
        <dbReference type="PROSITE-ProRule" id="PRU00381"/>
    </source>
</evidence>
<evidence type="ECO:0000256" key="5">
    <source>
        <dbReference type="SAM" id="MobiDB-lite"/>
    </source>
</evidence>
<evidence type="ECO:0000269" key="6">
    <source>
    </source>
</evidence>
<evidence type="ECO:0000269" key="7">
    <source>
    </source>
</evidence>
<evidence type="ECO:0000269" key="8">
    <source>
    </source>
</evidence>
<evidence type="ECO:0000269" key="9">
    <source>
    </source>
</evidence>
<evidence type="ECO:0000269" key="10">
    <source>
    </source>
</evidence>
<evidence type="ECO:0000269" key="11">
    <source>
    </source>
</evidence>
<evidence type="ECO:0000269" key="12">
    <source>
    </source>
</evidence>
<evidence type="ECO:0000303" key="13">
    <source>
    </source>
</evidence>
<evidence type="ECO:0000303" key="14">
    <source ref="2"/>
</evidence>
<evidence type="ECO:0000305" key="15"/>
<evidence type="ECO:0000312" key="16">
    <source>
        <dbReference type="EMBL" id="AAI23264.1"/>
    </source>
</evidence>
<evidence type="ECO:0000312" key="17">
    <source>
        <dbReference type="EMBL" id="AAU25939.1"/>
    </source>
</evidence>
<evidence type="ECO:0000312" key="18">
    <source>
        <dbReference type="EMBL" id="AAV31938.1"/>
    </source>
</evidence>
<proteinExistence type="evidence at transcript level"/>
<gene>
    <name type="primary">pax3-b</name>
    <name evidence="18" type="synonym">pax3</name>
    <name evidence="13" type="synonym">pax3B</name>
</gene>
<organism>
    <name type="scientific">Xenopus laevis</name>
    <name type="common">African clawed frog</name>
    <dbReference type="NCBI Taxonomy" id="8355"/>
    <lineage>
        <taxon>Eukaryota</taxon>
        <taxon>Metazoa</taxon>
        <taxon>Chordata</taxon>
        <taxon>Craniata</taxon>
        <taxon>Vertebrata</taxon>
        <taxon>Euteleostomi</taxon>
        <taxon>Amphibia</taxon>
        <taxon>Batrachia</taxon>
        <taxon>Anura</taxon>
        <taxon>Pipoidea</taxon>
        <taxon>Pipidae</taxon>
        <taxon>Xenopodinae</taxon>
        <taxon>Xenopus</taxon>
        <taxon>Xenopus</taxon>
    </lineage>
</organism>